<feature type="chain" id="PRO_0000090492" description="Photosystem II protein D1 1" evidence="1">
    <location>
        <begin position="1"/>
        <end position="344"/>
    </location>
</feature>
<feature type="propeptide" id="PRO_0000316428" evidence="1 4">
    <location>
        <begin position="345"/>
        <end position="360"/>
    </location>
</feature>
<feature type="transmembrane region" description="Helical" evidence="1">
    <location>
        <begin position="29"/>
        <end position="46"/>
    </location>
</feature>
<feature type="transmembrane region" description="Helical" evidence="1">
    <location>
        <begin position="118"/>
        <end position="133"/>
    </location>
</feature>
<feature type="transmembrane region" description="Helical" evidence="1">
    <location>
        <begin position="142"/>
        <end position="156"/>
    </location>
</feature>
<feature type="transmembrane region" description="Helical" evidence="1">
    <location>
        <begin position="197"/>
        <end position="218"/>
    </location>
</feature>
<feature type="transmembrane region" description="Helical" evidence="1">
    <location>
        <begin position="274"/>
        <end position="288"/>
    </location>
</feature>
<feature type="binding site" description="axial binding residue" evidence="1">
    <location>
        <position position="118"/>
    </location>
    <ligand>
        <name>chlorophyll a</name>
        <dbReference type="ChEBI" id="CHEBI:58416"/>
        <label>ChlzD1</label>
    </ligand>
    <ligandPart>
        <name>Mg</name>
        <dbReference type="ChEBI" id="CHEBI:25107"/>
    </ligandPart>
</feature>
<feature type="binding site" evidence="1">
    <location>
        <position position="126"/>
    </location>
    <ligand>
        <name>pheophytin a</name>
        <dbReference type="ChEBI" id="CHEBI:136840"/>
        <label>D1</label>
    </ligand>
</feature>
<feature type="binding site" evidence="1">
    <location>
        <position position="170"/>
    </location>
    <ligand>
        <name>[CaMn4O5] cluster</name>
        <dbReference type="ChEBI" id="CHEBI:189552"/>
    </ligand>
</feature>
<feature type="binding site" evidence="1">
    <location>
        <position position="189"/>
    </location>
    <ligand>
        <name>[CaMn4O5] cluster</name>
        <dbReference type="ChEBI" id="CHEBI:189552"/>
    </ligand>
</feature>
<feature type="binding site" description="axial binding residue" evidence="1">
    <location>
        <position position="198"/>
    </location>
    <ligand>
        <name>chlorophyll a</name>
        <dbReference type="ChEBI" id="CHEBI:58416"/>
        <label>PD1</label>
    </ligand>
    <ligandPart>
        <name>Mg</name>
        <dbReference type="ChEBI" id="CHEBI:25107"/>
    </ligandPart>
</feature>
<feature type="binding site" evidence="1">
    <location>
        <position position="215"/>
    </location>
    <ligand>
        <name>a quinone</name>
        <dbReference type="ChEBI" id="CHEBI:132124"/>
        <label>B</label>
    </ligand>
</feature>
<feature type="binding site" evidence="1">
    <location>
        <position position="215"/>
    </location>
    <ligand>
        <name>Fe cation</name>
        <dbReference type="ChEBI" id="CHEBI:24875"/>
        <note>ligand shared with heterodimeric partner</note>
    </ligand>
</feature>
<feature type="binding site" evidence="1">
    <location>
        <begin position="264"/>
        <end position="265"/>
    </location>
    <ligand>
        <name>a quinone</name>
        <dbReference type="ChEBI" id="CHEBI:132124"/>
        <label>B</label>
    </ligand>
</feature>
<feature type="binding site" evidence="1">
    <location>
        <position position="272"/>
    </location>
    <ligand>
        <name>Fe cation</name>
        <dbReference type="ChEBI" id="CHEBI:24875"/>
        <note>ligand shared with heterodimeric partner</note>
    </ligand>
</feature>
<feature type="binding site" evidence="1">
    <location>
        <position position="332"/>
    </location>
    <ligand>
        <name>[CaMn4O5] cluster</name>
        <dbReference type="ChEBI" id="CHEBI:189552"/>
    </ligand>
</feature>
<feature type="binding site" evidence="1">
    <location>
        <position position="333"/>
    </location>
    <ligand>
        <name>[CaMn4O5] cluster</name>
        <dbReference type="ChEBI" id="CHEBI:189552"/>
    </ligand>
</feature>
<feature type="binding site" evidence="1">
    <location>
        <position position="342"/>
    </location>
    <ligand>
        <name>[CaMn4O5] cluster</name>
        <dbReference type="ChEBI" id="CHEBI:189552"/>
    </ligand>
</feature>
<feature type="binding site" evidence="1">
    <location>
        <position position="344"/>
    </location>
    <ligand>
        <name>[CaMn4O5] cluster</name>
        <dbReference type="ChEBI" id="CHEBI:189552"/>
    </ligand>
</feature>
<feature type="site" description="Tyrosine radical intermediate" evidence="1">
    <location>
        <position position="161"/>
    </location>
</feature>
<feature type="site" description="Stabilizes free radical intermediate" evidence="1">
    <location>
        <position position="190"/>
    </location>
</feature>
<feature type="site" description="Cleavage; by CtpA" evidence="1 4">
    <location>
        <begin position="344"/>
        <end position="345"/>
    </location>
</feature>
<feature type="sequence conflict" description="In Ref. 1; CAA68778." evidence="3" ref="1">
    <original>G</original>
    <variation>A</variation>
    <location>
        <position position="90"/>
    </location>
</feature>
<feature type="sequence conflict" description="In Ref. 1; CAA68778." evidence="3" ref="1">
    <original>I</original>
    <variation>N</variation>
    <location>
        <position position="115"/>
    </location>
</feature>
<feature type="sequence conflict" description="In Ref. 1; CAA68778." evidence="3" ref="1">
    <original>F</original>
    <variation>S</variation>
    <location>
        <position position="273"/>
    </location>
</feature>
<reference key="1">
    <citation type="journal article" date="1987" name="Nucleic Acids Res.">
        <title>Nucleotide sequence of a member of the psbA multigene family from the unicellular cyanobacterium Synechocystis 6803.</title>
        <authorList>
            <person name="Osiewacz H.D."/>
            <person name="McIntosh L."/>
        </authorList>
    </citation>
    <scope>NUCLEOTIDE SEQUENCE [GENOMIC DNA]</scope>
</reference>
<reference key="2">
    <citation type="journal article" date="1996" name="DNA Res.">
        <title>Sequence analysis of the genome of the unicellular cyanobacterium Synechocystis sp. strain PCC6803. II. Sequence determination of the entire genome and assignment of potential protein-coding regions.</title>
        <authorList>
            <person name="Kaneko T."/>
            <person name="Sato S."/>
            <person name="Kotani H."/>
            <person name="Tanaka A."/>
            <person name="Asamizu E."/>
            <person name="Nakamura Y."/>
            <person name="Miyajima N."/>
            <person name="Hirosawa M."/>
            <person name="Sugiura M."/>
            <person name="Sasamoto S."/>
            <person name="Kimura T."/>
            <person name="Hosouchi T."/>
            <person name="Matsuno A."/>
            <person name="Muraki A."/>
            <person name="Nakazaki N."/>
            <person name="Naruo K."/>
            <person name="Okumura S."/>
            <person name="Shimpo S."/>
            <person name="Takeuchi C."/>
            <person name="Wada T."/>
            <person name="Watanabe A."/>
            <person name="Yamada M."/>
            <person name="Yasuda M."/>
            <person name="Tabata S."/>
        </authorList>
    </citation>
    <scope>NUCLEOTIDE SEQUENCE [LARGE SCALE GENOMIC DNA]</scope>
    <source>
        <strain>ATCC 27184 / PCC 6803 / Kazusa</strain>
    </source>
</reference>
<reference key="3">
    <citation type="journal article" date="1998" name="FEBS Lett.">
        <title>Thylakoid protein phosphorylation in evolutionally divergent species with oxygenic photosynthesis.</title>
        <authorList>
            <person name="Pursiheimo S."/>
            <person name="Rintamaeki E."/>
            <person name="Baena-Gonzalez E."/>
            <person name="Aro E.-M."/>
        </authorList>
    </citation>
    <scope>SUBCELLULAR LOCATION</scope>
    <scope>LACK OF PHOSPHORYLATION</scope>
    <source>
        <strain>ATCC 27184 / PCC 6803 / Kazusa</strain>
    </source>
</reference>
<reference key="4">
    <citation type="journal article" date="1994" name="J. Biol. Chem.">
        <title>Molecular cloning and characterization of the ctpA gene encoding a carboxyl-terminal processing protease. Analysis of a spontaneous photosystem II-deficient mutant strain of the cyanobacterium Synechocystis sp. PCC 6803.</title>
        <authorList>
            <person name="Shestakov S.V."/>
            <person name="Anbudurai P.R."/>
            <person name="Stanbekova G.E."/>
            <person name="Gadzhiev A."/>
            <person name="Lind L.K."/>
            <person name="Pakrasi H.B."/>
        </authorList>
    </citation>
    <scope>PROBABLE CLEAVAGE</scope>
    <source>
        <strain>ATCC 27184 / PCC 6803 / N-1</strain>
    </source>
</reference>
<dbReference type="EC" id="1.10.3.9" evidence="1"/>
<dbReference type="EMBL" id="Y00885">
    <property type="protein sequence ID" value="CAA68778.1"/>
    <property type="molecule type" value="Genomic_DNA"/>
</dbReference>
<dbReference type="EMBL" id="BA000022">
    <property type="protein sequence ID" value="BAA18829.1"/>
    <property type="molecule type" value="Genomic_DNA"/>
</dbReference>
<dbReference type="PIR" id="S76917">
    <property type="entry name" value="F2YB13"/>
</dbReference>
<dbReference type="SMR" id="P07826"/>
<dbReference type="IntAct" id="P07826">
    <property type="interactions" value="2"/>
</dbReference>
<dbReference type="STRING" id="1148.gene:10500601"/>
<dbReference type="PaxDb" id="1148-1653919"/>
<dbReference type="EnsemblBacteria" id="BAA18829">
    <property type="protein sequence ID" value="BAA18829"/>
    <property type="gene ID" value="BAA18829"/>
</dbReference>
<dbReference type="KEGG" id="syn:slr1181"/>
<dbReference type="eggNOG" id="ENOG502Z87P">
    <property type="taxonomic scope" value="Bacteria"/>
</dbReference>
<dbReference type="InParanoid" id="P07826"/>
<dbReference type="PhylomeDB" id="P07826"/>
<dbReference type="BioCyc" id="MetaCyc:PSBA1-MONOMER"/>
<dbReference type="Proteomes" id="UP000001425">
    <property type="component" value="Chromosome"/>
</dbReference>
<dbReference type="GO" id="GO:0009523">
    <property type="term" value="C:photosystem II"/>
    <property type="evidence" value="ECO:0000318"/>
    <property type="project" value="GO_Central"/>
</dbReference>
<dbReference type="GO" id="GO:0031676">
    <property type="term" value="C:plasma membrane-derived thylakoid membrane"/>
    <property type="evidence" value="ECO:0007669"/>
    <property type="project" value="UniProtKB-SubCell"/>
</dbReference>
<dbReference type="GO" id="GO:0016168">
    <property type="term" value="F:chlorophyll binding"/>
    <property type="evidence" value="ECO:0007669"/>
    <property type="project" value="UniProtKB-UniRule"/>
</dbReference>
<dbReference type="GO" id="GO:0045156">
    <property type="term" value="F:electron transporter, transferring electrons within the cyclic electron transport pathway of photosynthesis activity"/>
    <property type="evidence" value="ECO:0007669"/>
    <property type="project" value="InterPro"/>
</dbReference>
<dbReference type="GO" id="GO:0005506">
    <property type="term" value="F:iron ion binding"/>
    <property type="evidence" value="ECO:0007669"/>
    <property type="project" value="UniProtKB-UniRule"/>
</dbReference>
<dbReference type="GO" id="GO:0016682">
    <property type="term" value="F:oxidoreductase activity, acting on diphenols and related substances as donors, oxygen as acceptor"/>
    <property type="evidence" value="ECO:0007669"/>
    <property type="project" value="UniProtKB-UniRule"/>
</dbReference>
<dbReference type="GO" id="GO:0010242">
    <property type="term" value="F:oxygen evolving activity"/>
    <property type="evidence" value="ECO:0007669"/>
    <property type="project" value="UniProtKB-EC"/>
</dbReference>
<dbReference type="GO" id="GO:0009772">
    <property type="term" value="P:photosynthetic electron transport in photosystem II"/>
    <property type="evidence" value="ECO:0007669"/>
    <property type="project" value="InterPro"/>
</dbReference>
<dbReference type="GO" id="GO:0009635">
    <property type="term" value="P:response to herbicide"/>
    <property type="evidence" value="ECO:0007669"/>
    <property type="project" value="UniProtKB-KW"/>
</dbReference>
<dbReference type="FunFam" id="1.20.85.10:FF:000002">
    <property type="entry name" value="Photosystem II protein D1"/>
    <property type="match status" value="1"/>
</dbReference>
<dbReference type="Gene3D" id="1.20.85.10">
    <property type="entry name" value="Photosystem II protein D1-like"/>
    <property type="match status" value="2"/>
</dbReference>
<dbReference type="HAMAP" id="MF_01379">
    <property type="entry name" value="PSII_PsbA_D1"/>
    <property type="match status" value="1"/>
</dbReference>
<dbReference type="InterPro" id="IPR055266">
    <property type="entry name" value="D1/D2"/>
</dbReference>
<dbReference type="InterPro" id="IPR036854">
    <property type="entry name" value="Photo_II_D1/D2_sf"/>
</dbReference>
<dbReference type="InterPro" id="IPR000484">
    <property type="entry name" value="Photo_RC_L/M"/>
</dbReference>
<dbReference type="InterPro" id="IPR055265">
    <property type="entry name" value="Photo_RC_L/M_CS"/>
</dbReference>
<dbReference type="InterPro" id="IPR005867">
    <property type="entry name" value="PSII_D1"/>
</dbReference>
<dbReference type="NCBIfam" id="TIGR01151">
    <property type="entry name" value="psbA"/>
    <property type="match status" value="1"/>
</dbReference>
<dbReference type="PANTHER" id="PTHR33149:SF12">
    <property type="entry name" value="PHOTOSYSTEM II D2 PROTEIN"/>
    <property type="match status" value="1"/>
</dbReference>
<dbReference type="PANTHER" id="PTHR33149">
    <property type="entry name" value="PHOTOSYSTEM II PROTEIN D1"/>
    <property type="match status" value="1"/>
</dbReference>
<dbReference type="Pfam" id="PF00124">
    <property type="entry name" value="Photo_RC"/>
    <property type="match status" value="1"/>
</dbReference>
<dbReference type="PRINTS" id="PR00256">
    <property type="entry name" value="REACTNCENTRE"/>
</dbReference>
<dbReference type="SUPFAM" id="SSF81483">
    <property type="entry name" value="Bacterial photosystem II reaction centre, L and M subunits"/>
    <property type="match status" value="1"/>
</dbReference>
<dbReference type="PROSITE" id="PS00244">
    <property type="entry name" value="REACTION_CENTER"/>
    <property type="match status" value="1"/>
</dbReference>
<keyword id="KW-0106">Calcium</keyword>
<keyword id="KW-0148">Chlorophyll</keyword>
<keyword id="KW-0157">Chromophore</keyword>
<keyword id="KW-0249">Electron transport</keyword>
<keyword id="KW-0359">Herbicide resistance</keyword>
<keyword id="KW-0408">Iron</keyword>
<keyword id="KW-0460">Magnesium</keyword>
<keyword id="KW-0464">Manganese</keyword>
<keyword id="KW-0472">Membrane</keyword>
<keyword id="KW-0479">Metal-binding</keyword>
<keyword id="KW-0560">Oxidoreductase</keyword>
<keyword id="KW-0602">Photosynthesis</keyword>
<keyword id="KW-0604">Photosystem II</keyword>
<keyword id="KW-1185">Reference proteome</keyword>
<keyword id="KW-0793">Thylakoid</keyword>
<keyword id="KW-0812">Transmembrane</keyword>
<keyword id="KW-1133">Transmembrane helix</keyword>
<keyword id="KW-0813">Transport</keyword>
<proteinExistence type="evidence at protein level"/>
<sequence>MTTTQLGLQEQSLWSRFCCWITSTSNRLYIGWFGVLMIPTLLTATTCFIIAFIAAPPVDIDGIREPIAGSLLYGNNIITAAVVPSSNAIGLHFYPIWEAHSLDEWLYNGGPYQLIVFHFLIGIFCYLGRQWELSYRLGMRPWICVAYSAPVAAATATLLIYSIGQGSFSDGLPLGISGTFNFMLVLQAEHNVLMHPFHMLGVAGVFGGALFAAMHGSLVTSSLIRETTEVESQNQGYKFGQEEETYNIVAAHGYFGRLIFQYASFNNSRALHFFLGAWPVVGIWFAALAVCCFAFNLNGFNFNQSILDAQGRPVSTWADVINRANIGFEVMHERNVHNFPLDLASGDAQMVALNAPAIEG</sequence>
<organism>
    <name type="scientific">Synechocystis sp. (strain ATCC 27184 / PCC 6803 / Kazusa)</name>
    <dbReference type="NCBI Taxonomy" id="1111708"/>
    <lineage>
        <taxon>Bacteria</taxon>
        <taxon>Bacillati</taxon>
        <taxon>Cyanobacteriota</taxon>
        <taxon>Cyanophyceae</taxon>
        <taxon>Synechococcales</taxon>
        <taxon>Merismopediaceae</taxon>
        <taxon>Synechocystis</taxon>
    </lineage>
</organism>
<accession>P07826</accession>
<accession>P74710</accession>
<protein>
    <recommendedName>
        <fullName evidence="1">Photosystem II protein D1 1</fullName>
        <shortName evidence="1">PSII D1 protein 1</shortName>
        <ecNumber evidence="1">1.10.3.9</ecNumber>
    </recommendedName>
    <alternativeName>
        <fullName evidence="1">Photosystem II Q(B) protein 1</fullName>
    </alternativeName>
</protein>
<comment type="function">
    <text evidence="1">Photosystem II (PSII) is a light-driven water:plastoquinone oxidoreductase that uses light energy to abstract electrons from H(2)O, generating O(2) and a proton gradient subsequently used for ATP formation. It consists of a core antenna complex that captures photons, and an electron transfer chain that converts photonic excitation into a charge separation. The D1/D2 (PsbA/PsbD) reaction center heterodimer binds P680, the primary electron donor of PSII as well as several subsequent electron acceptors.</text>
</comment>
<comment type="catalytic activity">
    <reaction evidence="1">
        <text>2 a plastoquinone + 4 hnu + 2 H2O = 2 a plastoquinol + O2</text>
        <dbReference type="Rhea" id="RHEA:36359"/>
        <dbReference type="Rhea" id="RHEA-COMP:9561"/>
        <dbReference type="Rhea" id="RHEA-COMP:9562"/>
        <dbReference type="ChEBI" id="CHEBI:15377"/>
        <dbReference type="ChEBI" id="CHEBI:15379"/>
        <dbReference type="ChEBI" id="CHEBI:17757"/>
        <dbReference type="ChEBI" id="CHEBI:30212"/>
        <dbReference type="ChEBI" id="CHEBI:62192"/>
        <dbReference type="EC" id="1.10.3.9"/>
    </reaction>
</comment>
<comment type="cofactor">
    <text evidence="1">The D1/D2 heterodimer binds P680, chlorophylls that are the primary electron donor of PSII, and subsequent electron acceptors. It shares a non-heme iron and each subunit binds pheophytin, quinone, additional chlorophylls, carotenoids and lipids. D1 provides most of the ligands for the Mn4-Ca-O5 cluster of the oxygen-evolving complex (OEC). There is also a Cl(-1) ion associated with D1 and D2, which is required for oxygen evolution. The PSII complex binds additional chlorophylls, carotenoids and specific lipids.</text>
</comment>
<comment type="subunit">
    <text evidence="1">PSII is composed of 1 copy each of membrane proteins PsbA, PsbB, PsbC, PsbD, PsbE, PsbF, PsbH, PsbI, PsbJ, PsbK, PsbL, PsbM, PsbT, PsbX, PsbY, PsbZ, Psb30/Ycf12, peripheral proteins PsbO, CyanoQ (PsbQ), PsbU, PsbV and a large number of cofactors. It forms dimeric complexes.</text>
</comment>
<comment type="subcellular location">
    <subcellularLocation>
        <location evidence="1 5">Cellular thylakoid membrane</location>
        <topology evidence="1 5">Multi-pass membrane protein</topology>
    </subcellularLocation>
</comment>
<comment type="PTM">
    <text evidence="1 4">C-terminally processed by CtpA; processing is essential to allow assembly of the oxygen-evolving complex and photosynthetic growth.</text>
</comment>
<comment type="PTM">
    <text evidence="1">Tyr-161 forms a radical intermediate that is referred to as redox-active TyrZ, YZ or Y-Z.</text>
</comment>
<comment type="PTM">
    <text evidence="1">C-terminally processed by CtpA; processing is essential to allow assembly of the oxygen-evolving complex and thus photosynthetic growth.</text>
</comment>
<comment type="miscellaneous">
    <text evidence="1 2">Cyanobacteria usually contain more than 2 copies of the psbA gene.</text>
</comment>
<comment type="miscellaneous">
    <text evidence="1">2 of the reaction center chlorophylls (ChlD1 and ChlD2) are entirely coordinated by water.</text>
</comment>
<comment type="miscellaneous">
    <text evidence="1">Herbicides such as atrazine, BNT, diuron or ioxynil bind in the Q(B) binding site and block subsequent electron transfer.</text>
</comment>
<comment type="similarity">
    <text evidence="1">Belongs to the reaction center PufL/M/PsbA/D family.</text>
</comment>
<name>PSBA1_SYNY3</name>
<gene>
    <name evidence="1 3" type="primary">psbA1</name>
    <name type="synonym">psbA-1</name>
    <name type="ordered locus">slr1181</name>
</gene>
<evidence type="ECO:0000255" key="1">
    <source>
        <dbReference type="HAMAP-Rule" id="MF_01379"/>
    </source>
</evidence>
<evidence type="ECO:0000269" key="2">
    <source>
    </source>
</evidence>
<evidence type="ECO:0000305" key="3"/>
<evidence type="ECO:0000305" key="4">
    <source>
    </source>
</evidence>
<evidence type="ECO:0000305" key="5">
    <source>
    </source>
</evidence>